<name>RL5_RHOPA</name>
<protein>
    <recommendedName>
        <fullName evidence="2">Large ribosomal subunit protein uL5</fullName>
    </recommendedName>
    <alternativeName>
        <fullName evidence="4">50S ribosomal protein L5</fullName>
    </alternativeName>
    <alternativeName>
        <fullName>RRP-L5</fullName>
    </alternativeName>
</protein>
<keyword id="KW-0687">Ribonucleoprotein</keyword>
<keyword id="KW-0689">Ribosomal protein</keyword>
<keyword id="KW-0694">RNA-binding</keyword>
<keyword id="KW-0699">rRNA-binding</keyword>
<keyword id="KW-0820">tRNA-binding</keyword>
<accession>Q6N4U5</accession>
<organism>
    <name type="scientific">Rhodopseudomonas palustris (strain ATCC BAA-98 / CGA009)</name>
    <dbReference type="NCBI Taxonomy" id="258594"/>
    <lineage>
        <taxon>Bacteria</taxon>
        <taxon>Pseudomonadati</taxon>
        <taxon>Pseudomonadota</taxon>
        <taxon>Alphaproteobacteria</taxon>
        <taxon>Hyphomicrobiales</taxon>
        <taxon>Nitrobacteraceae</taxon>
        <taxon>Rhodopseudomonas</taxon>
    </lineage>
</organism>
<proteinExistence type="evidence at protein level"/>
<reference key="1">
    <citation type="journal article" date="2004" name="Nat. Biotechnol.">
        <title>Complete genome sequence of the metabolically versatile photosynthetic bacterium Rhodopseudomonas palustris.</title>
        <authorList>
            <person name="Larimer F.W."/>
            <person name="Chain P."/>
            <person name="Hauser L."/>
            <person name="Lamerdin J.E."/>
            <person name="Malfatti S."/>
            <person name="Do L."/>
            <person name="Land M.L."/>
            <person name="Pelletier D.A."/>
            <person name="Beatty J.T."/>
            <person name="Lang A.S."/>
            <person name="Tabita F.R."/>
            <person name="Gibson J.L."/>
            <person name="Hanson T.E."/>
            <person name="Bobst C."/>
            <person name="Torres y Torres J.L."/>
            <person name="Peres C."/>
            <person name="Harrison F.H."/>
            <person name="Gibson J."/>
            <person name="Harwood C.S."/>
        </authorList>
    </citation>
    <scope>NUCLEOTIDE SEQUENCE [LARGE SCALE GENOMIC DNA]</scope>
    <source>
        <strain>ATCC BAA-98 / CGA009</strain>
    </source>
</reference>
<reference key="2">
    <citation type="journal article" date="2004" name="J. Proteome Res.">
        <title>Characterization of the 70S ribosome from Rhodopseudomonas palustris using an integrated 'top-down' and 'bottom-up' mass spectrometric approach.</title>
        <authorList>
            <person name="Strader M.B."/>
            <person name="VerBerkmoes N.C."/>
            <person name="Tabb D.L."/>
            <person name="Connelly H.M."/>
            <person name="Barton J.W."/>
            <person name="Bruce B.D."/>
            <person name="Pelletier D.A."/>
            <person name="Davison B.H."/>
            <person name="Hettich R.L."/>
            <person name="Larimer F.W."/>
            <person name="Hurst G.B."/>
        </authorList>
    </citation>
    <scope>MASS SPECTROMETRY</scope>
    <source>
        <strain>ATCC BAA-98 / CGA009</strain>
    </source>
</reference>
<sequence length="185" mass="21038">MAETAYVPRLRTEYDRHIRTQLTEKFGYANVMQVPKLDKVVLNMGVGEAVNDRKKAEQAAADLSLIAGQKAVITYSRVAISTFKLRENQPIGCKVTLRQARMYEFIDRLITVALPRVRDFRGLNPKSFDGRGNYSLGIKEHIIFPEIDFDKTGESWGMDITVCTTARTDDEARALLTAFNFPFRQ</sequence>
<comment type="function">
    <text evidence="2">This is one of the proteins that bind and probably mediate the attachment of the 5S RNA into the large ribosomal subunit, where it forms part of the central protuberance. In the 70S ribosome it contacts protein S13 of the 30S subunit (bridge B1b), connecting the 2 subunits; this bridge is implicated in subunit movement. Contacts the P site tRNA; the 5S rRNA and some of its associated proteins might help stabilize positioning of ribosome-bound tRNAs.</text>
</comment>
<comment type="subunit">
    <text evidence="1">Part of the 50S ribosomal subunit; part of the 5S rRNA subcomplex. Contacts the 5S rRNA and the P site tRNA. Forms a bridge to the 30S subunit in the 70S ribosome (By similarity).</text>
</comment>
<comment type="PTM">
    <text>Both N-terminus methionine truncation and retention have been observed for this protein.</text>
</comment>
<comment type="PTM">
    <text>May be methylated twice, on undetermined residues.</text>
</comment>
<comment type="mass spectrometry" mass="21064.6" method="Electrospray" evidence="3">
    <text>For the protein without N-terminus methionine removal.</text>
</comment>
<comment type="similarity">
    <text evidence="2">Belongs to the universal ribosomal protein uL5 family.</text>
</comment>
<comment type="caution">
    <text evidence="4">Both N-terminus methionine truncation and retention have been observed for this protein by 2 different experiments.</text>
</comment>
<dbReference type="EMBL" id="BX572603">
    <property type="protein sequence ID" value="CAE28679.1"/>
    <property type="molecule type" value="Genomic_DNA"/>
</dbReference>
<dbReference type="RefSeq" id="WP_011158783.1">
    <property type="nucleotide sequence ID" value="NZ_CP116810.1"/>
</dbReference>
<dbReference type="SMR" id="Q6N4U5"/>
<dbReference type="IntAct" id="Q6N4U5">
    <property type="interactions" value="1"/>
</dbReference>
<dbReference type="STRING" id="258594.RPA3238"/>
<dbReference type="GeneID" id="66894324"/>
<dbReference type="eggNOG" id="COG0094">
    <property type="taxonomic scope" value="Bacteria"/>
</dbReference>
<dbReference type="HOGENOM" id="CLU_061015_2_1_5"/>
<dbReference type="PhylomeDB" id="Q6N4U5"/>
<dbReference type="GO" id="GO:1990904">
    <property type="term" value="C:ribonucleoprotein complex"/>
    <property type="evidence" value="ECO:0007669"/>
    <property type="project" value="UniProtKB-KW"/>
</dbReference>
<dbReference type="GO" id="GO:0005840">
    <property type="term" value="C:ribosome"/>
    <property type="evidence" value="ECO:0007669"/>
    <property type="project" value="UniProtKB-KW"/>
</dbReference>
<dbReference type="GO" id="GO:0019843">
    <property type="term" value="F:rRNA binding"/>
    <property type="evidence" value="ECO:0007669"/>
    <property type="project" value="UniProtKB-UniRule"/>
</dbReference>
<dbReference type="GO" id="GO:0003735">
    <property type="term" value="F:structural constituent of ribosome"/>
    <property type="evidence" value="ECO:0007669"/>
    <property type="project" value="InterPro"/>
</dbReference>
<dbReference type="GO" id="GO:0000049">
    <property type="term" value="F:tRNA binding"/>
    <property type="evidence" value="ECO:0007669"/>
    <property type="project" value="UniProtKB-UniRule"/>
</dbReference>
<dbReference type="GO" id="GO:0006412">
    <property type="term" value="P:translation"/>
    <property type="evidence" value="ECO:0007669"/>
    <property type="project" value="UniProtKB-UniRule"/>
</dbReference>
<dbReference type="FunFam" id="3.30.1440.10:FF:000001">
    <property type="entry name" value="50S ribosomal protein L5"/>
    <property type="match status" value="1"/>
</dbReference>
<dbReference type="Gene3D" id="3.30.1440.10">
    <property type="match status" value="1"/>
</dbReference>
<dbReference type="HAMAP" id="MF_01333_B">
    <property type="entry name" value="Ribosomal_uL5_B"/>
    <property type="match status" value="1"/>
</dbReference>
<dbReference type="InterPro" id="IPR002132">
    <property type="entry name" value="Ribosomal_uL5"/>
</dbReference>
<dbReference type="InterPro" id="IPR020930">
    <property type="entry name" value="Ribosomal_uL5_bac-type"/>
</dbReference>
<dbReference type="InterPro" id="IPR031309">
    <property type="entry name" value="Ribosomal_uL5_C"/>
</dbReference>
<dbReference type="InterPro" id="IPR020929">
    <property type="entry name" value="Ribosomal_uL5_CS"/>
</dbReference>
<dbReference type="InterPro" id="IPR022803">
    <property type="entry name" value="Ribosomal_uL5_dom_sf"/>
</dbReference>
<dbReference type="InterPro" id="IPR031310">
    <property type="entry name" value="Ribosomal_uL5_N"/>
</dbReference>
<dbReference type="NCBIfam" id="NF000585">
    <property type="entry name" value="PRK00010.1"/>
    <property type="match status" value="1"/>
</dbReference>
<dbReference type="PANTHER" id="PTHR11994">
    <property type="entry name" value="60S RIBOSOMAL PROTEIN L11-RELATED"/>
    <property type="match status" value="1"/>
</dbReference>
<dbReference type="Pfam" id="PF00281">
    <property type="entry name" value="Ribosomal_L5"/>
    <property type="match status" value="1"/>
</dbReference>
<dbReference type="Pfam" id="PF00673">
    <property type="entry name" value="Ribosomal_L5_C"/>
    <property type="match status" value="1"/>
</dbReference>
<dbReference type="PIRSF" id="PIRSF002161">
    <property type="entry name" value="Ribosomal_L5"/>
    <property type="match status" value="1"/>
</dbReference>
<dbReference type="SUPFAM" id="SSF55282">
    <property type="entry name" value="RL5-like"/>
    <property type="match status" value="1"/>
</dbReference>
<dbReference type="PROSITE" id="PS00358">
    <property type="entry name" value="RIBOSOMAL_L5"/>
    <property type="match status" value="1"/>
</dbReference>
<evidence type="ECO:0000250" key="1"/>
<evidence type="ECO:0000255" key="2">
    <source>
        <dbReference type="HAMAP-Rule" id="MF_01333"/>
    </source>
</evidence>
<evidence type="ECO:0000269" key="3">
    <source>
    </source>
</evidence>
<evidence type="ECO:0000305" key="4"/>
<feature type="chain" id="PRO_0000124977" description="Large ribosomal subunit protein uL5">
    <location>
        <begin position="1"/>
        <end position="185"/>
    </location>
</feature>
<gene>
    <name evidence="2" type="primary">rplE</name>
    <name type="ordered locus">RPA3238</name>
</gene>